<gene>
    <name evidence="1" type="primary">efp</name>
    <name type="ordered locus">GWCH70_2339</name>
</gene>
<evidence type="ECO:0000255" key="1">
    <source>
        <dbReference type="HAMAP-Rule" id="MF_00141"/>
    </source>
</evidence>
<accession>C5D486</accession>
<keyword id="KW-0963">Cytoplasm</keyword>
<keyword id="KW-0251">Elongation factor</keyword>
<keyword id="KW-0648">Protein biosynthesis</keyword>
<sequence length="185" mass="20835">MISVNDFRTGLTIEVDGDIWRVMDFQHVKPGKGAAFVRSKLRNLRTGAIQEKTFRAGEKVNRAQIDTRKMQYLYANGDQHVFMDMETYEQIELPAKQIEHELKFLKENMEVYIMMYQGETIGVELPNTVELKVVETEPGIKGDTASGGSKPAKLETGLVVQVPFFVNEGDTLIINTADGTYVSRA</sequence>
<dbReference type="EMBL" id="CP001638">
    <property type="protein sequence ID" value="ACS25042.1"/>
    <property type="molecule type" value="Genomic_DNA"/>
</dbReference>
<dbReference type="SMR" id="C5D486"/>
<dbReference type="STRING" id="471223.GWCH70_2339"/>
<dbReference type="KEGG" id="gwc:GWCH70_2339"/>
<dbReference type="eggNOG" id="COG0231">
    <property type="taxonomic scope" value="Bacteria"/>
</dbReference>
<dbReference type="HOGENOM" id="CLU_074944_0_1_9"/>
<dbReference type="OrthoDB" id="9801844at2"/>
<dbReference type="UniPathway" id="UPA00345"/>
<dbReference type="GO" id="GO:0005737">
    <property type="term" value="C:cytoplasm"/>
    <property type="evidence" value="ECO:0007669"/>
    <property type="project" value="UniProtKB-SubCell"/>
</dbReference>
<dbReference type="GO" id="GO:0003746">
    <property type="term" value="F:translation elongation factor activity"/>
    <property type="evidence" value="ECO:0007669"/>
    <property type="project" value="UniProtKB-UniRule"/>
</dbReference>
<dbReference type="GO" id="GO:0043043">
    <property type="term" value="P:peptide biosynthetic process"/>
    <property type="evidence" value="ECO:0007669"/>
    <property type="project" value="InterPro"/>
</dbReference>
<dbReference type="CDD" id="cd04470">
    <property type="entry name" value="S1_EF-P_repeat_1"/>
    <property type="match status" value="1"/>
</dbReference>
<dbReference type="CDD" id="cd05794">
    <property type="entry name" value="S1_EF-P_repeat_2"/>
    <property type="match status" value="1"/>
</dbReference>
<dbReference type="FunFam" id="2.30.30.30:FF:000010">
    <property type="entry name" value="Elongation factor P"/>
    <property type="match status" value="1"/>
</dbReference>
<dbReference type="FunFam" id="2.40.50.140:FF:000004">
    <property type="entry name" value="Elongation factor P"/>
    <property type="match status" value="1"/>
</dbReference>
<dbReference type="FunFam" id="2.40.50.140:FF:000009">
    <property type="entry name" value="Elongation factor P"/>
    <property type="match status" value="1"/>
</dbReference>
<dbReference type="Gene3D" id="2.30.30.30">
    <property type="match status" value="1"/>
</dbReference>
<dbReference type="Gene3D" id="2.40.50.140">
    <property type="entry name" value="Nucleic acid-binding proteins"/>
    <property type="match status" value="2"/>
</dbReference>
<dbReference type="HAMAP" id="MF_00141">
    <property type="entry name" value="EF_P"/>
    <property type="match status" value="1"/>
</dbReference>
<dbReference type="InterPro" id="IPR015365">
    <property type="entry name" value="Elong-fact-P_C"/>
</dbReference>
<dbReference type="InterPro" id="IPR012340">
    <property type="entry name" value="NA-bd_OB-fold"/>
</dbReference>
<dbReference type="InterPro" id="IPR014722">
    <property type="entry name" value="Rib_uL2_dom2"/>
</dbReference>
<dbReference type="InterPro" id="IPR020599">
    <property type="entry name" value="Transl_elong_fac_P/YeiP"/>
</dbReference>
<dbReference type="InterPro" id="IPR013185">
    <property type="entry name" value="Transl_elong_KOW-like"/>
</dbReference>
<dbReference type="InterPro" id="IPR001059">
    <property type="entry name" value="Transl_elong_P/YeiP_cen"/>
</dbReference>
<dbReference type="InterPro" id="IPR013852">
    <property type="entry name" value="Transl_elong_P/YeiP_CS"/>
</dbReference>
<dbReference type="InterPro" id="IPR011768">
    <property type="entry name" value="Transl_elongation_fac_P"/>
</dbReference>
<dbReference type="InterPro" id="IPR008991">
    <property type="entry name" value="Translation_prot_SH3-like_sf"/>
</dbReference>
<dbReference type="NCBIfam" id="TIGR00038">
    <property type="entry name" value="efp"/>
    <property type="match status" value="1"/>
</dbReference>
<dbReference type="NCBIfam" id="NF001810">
    <property type="entry name" value="PRK00529.1"/>
    <property type="match status" value="1"/>
</dbReference>
<dbReference type="PANTHER" id="PTHR30053">
    <property type="entry name" value="ELONGATION FACTOR P"/>
    <property type="match status" value="1"/>
</dbReference>
<dbReference type="PANTHER" id="PTHR30053:SF12">
    <property type="entry name" value="ELONGATION FACTOR P (EF-P) FAMILY PROTEIN"/>
    <property type="match status" value="1"/>
</dbReference>
<dbReference type="Pfam" id="PF01132">
    <property type="entry name" value="EFP"/>
    <property type="match status" value="1"/>
</dbReference>
<dbReference type="Pfam" id="PF08207">
    <property type="entry name" value="EFP_N"/>
    <property type="match status" value="1"/>
</dbReference>
<dbReference type="Pfam" id="PF09285">
    <property type="entry name" value="Elong-fact-P_C"/>
    <property type="match status" value="1"/>
</dbReference>
<dbReference type="PIRSF" id="PIRSF005901">
    <property type="entry name" value="EF-P"/>
    <property type="match status" value="1"/>
</dbReference>
<dbReference type="SMART" id="SM01185">
    <property type="entry name" value="EFP"/>
    <property type="match status" value="1"/>
</dbReference>
<dbReference type="SMART" id="SM00841">
    <property type="entry name" value="Elong-fact-P_C"/>
    <property type="match status" value="1"/>
</dbReference>
<dbReference type="SUPFAM" id="SSF50249">
    <property type="entry name" value="Nucleic acid-binding proteins"/>
    <property type="match status" value="2"/>
</dbReference>
<dbReference type="SUPFAM" id="SSF50104">
    <property type="entry name" value="Translation proteins SH3-like domain"/>
    <property type="match status" value="1"/>
</dbReference>
<dbReference type="PROSITE" id="PS01275">
    <property type="entry name" value="EFP"/>
    <property type="match status" value="1"/>
</dbReference>
<name>EFP_GEOSW</name>
<reference key="1">
    <citation type="submission" date="2009-06" db="EMBL/GenBank/DDBJ databases">
        <title>Complete sequence of chromosome of Geopacillus sp. WCH70.</title>
        <authorList>
            <consortium name="US DOE Joint Genome Institute"/>
            <person name="Lucas S."/>
            <person name="Copeland A."/>
            <person name="Lapidus A."/>
            <person name="Glavina del Rio T."/>
            <person name="Dalin E."/>
            <person name="Tice H."/>
            <person name="Bruce D."/>
            <person name="Goodwin L."/>
            <person name="Pitluck S."/>
            <person name="Chertkov O."/>
            <person name="Brettin T."/>
            <person name="Detter J.C."/>
            <person name="Han C."/>
            <person name="Larimer F."/>
            <person name="Land M."/>
            <person name="Hauser L."/>
            <person name="Kyrpides N."/>
            <person name="Mikhailova N."/>
            <person name="Brumm P."/>
            <person name="Mead D.A."/>
            <person name="Richardson P."/>
        </authorList>
    </citation>
    <scope>NUCLEOTIDE SEQUENCE [LARGE SCALE GENOMIC DNA]</scope>
    <source>
        <strain>WCH70</strain>
    </source>
</reference>
<feature type="chain" id="PRO_1000203271" description="Elongation factor P">
    <location>
        <begin position="1"/>
        <end position="185"/>
    </location>
</feature>
<proteinExistence type="inferred from homology"/>
<comment type="function">
    <text evidence="1">Involved in peptide bond synthesis. Stimulates efficient translation and peptide-bond synthesis on native or reconstituted 70S ribosomes in vitro. Probably functions indirectly by altering the affinity of the ribosome for aminoacyl-tRNA, thus increasing their reactivity as acceptors for peptidyl transferase.</text>
</comment>
<comment type="pathway">
    <text evidence="1">Protein biosynthesis; polypeptide chain elongation.</text>
</comment>
<comment type="subcellular location">
    <subcellularLocation>
        <location evidence="1">Cytoplasm</location>
    </subcellularLocation>
</comment>
<comment type="similarity">
    <text evidence="1">Belongs to the elongation factor P family.</text>
</comment>
<organism>
    <name type="scientific">Geobacillus sp. (strain WCH70)</name>
    <dbReference type="NCBI Taxonomy" id="471223"/>
    <lineage>
        <taxon>Bacteria</taxon>
        <taxon>Bacillati</taxon>
        <taxon>Bacillota</taxon>
        <taxon>Bacilli</taxon>
        <taxon>Bacillales</taxon>
        <taxon>Anoxybacillaceae</taxon>
        <taxon>Geobacillus</taxon>
    </lineage>
</organism>
<protein>
    <recommendedName>
        <fullName evidence="1">Elongation factor P</fullName>
        <shortName evidence="1">EF-P</shortName>
    </recommendedName>
</protein>